<proteinExistence type="evidence at protein level"/>
<protein>
    <recommendedName>
        <fullName>Water stress-responsive protein 7</fullName>
    </recommendedName>
</protein>
<evidence type="ECO:0000305" key="1"/>
<reference key="1">
    <citation type="journal article" date="1998" name="Plant Mol. Biol.">
        <title>Water-deficit-responsive proteins in maritime pine.</title>
        <authorList>
            <person name="Costa P."/>
            <person name="Bahrman N."/>
            <person name="Frigerio J.-M."/>
            <person name="Kremer A."/>
            <person name="Plomion C."/>
        </authorList>
    </citation>
    <scope>PROTEIN SEQUENCE</scope>
    <source>
        <tissue>Needle</tissue>
    </source>
</reference>
<sequence length="35" mass="3508">SDTTAGSYAEALAELLTIDPSLIVTTVDTQLAVAG</sequence>
<feature type="chain" id="PRO_0000055559" description="Water stress-responsive protein 7">
    <location>
        <begin position="1" status="less than"/>
        <end position="35" status="greater than"/>
    </location>
</feature>
<feature type="non-consecutive residues" evidence="1">
    <location>
        <begin position="15"/>
        <end position="16"/>
    </location>
</feature>
<feature type="non-consecutive residues" evidence="1">
    <location>
        <begin position="25"/>
        <end position="26"/>
    </location>
</feature>
<feature type="non-terminal residue">
    <location>
        <position position="1"/>
    </location>
</feature>
<feature type="non-terminal residue">
    <location>
        <position position="35"/>
    </location>
</feature>
<keyword id="KW-0903">Direct protein sequencing</keyword>
<keyword id="KW-0346">Stress response</keyword>
<comment type="induction">
    <text>By water stress.</text>
</comment>
<name>WSP7_PINPS</name>
<organism>
    <name type="scientific">Pinus pinaster</name>
    <name type="common">Maritime pine</name>
    <dbReference type="NCBI Taxonomy" id="71647"/>
    <lineage>
        <taxon>Eukaryota</taxon>
        <taxon>Viridiplantae</taxon>
        <taxon>Streptophyta</taxon>
        <taxon>Embryophyta</taxon>
        <taxon>Tracheophyta</taxon>
        <taxon>Spermatophyta</taxon>
        <taxon>Pinopsida</taxon>
        <taxon>Pinidae</taxon>
        <taxon>Conifers I</taxon>
        <taxon>Pinales</taxon>
        <taxon>Pinaceae</taxon>
        <taxon>Pinus</taxon>
        <taxon>Pinus subgen. Pinus</taxon>
    </lineage>
</organism>
<accession>P81086</accession>